<keyword id="KW-0007">Acetylation</keyword>
<keyword id="KW-0175">Coiled coil</keyword>
<keyword id="KW-0963">Cytoplasm</keyword>
<keyword id="KW-0539">Nucleus</keyword>
<keyword id="KW-0648">Protein biosynthesis</keyword>
<comment type="function">
    <text evidence="3">Positive modulator of ATM response to DNA damage.</text>
</comment>
<comment type="subunit">
    <text evidence="2">Part of a multisubunit complex that groups tRNA ligases for Arg (RARS1), Asp (DARS1), Gln (QARS1), Ile (IARS1), Leu (LARS1), Lys (KARS1), Met (MARS1) the bifunctional ligase for Glu and Pro (EPRS1) and the auxiliary subunits AIMP1/p43, AIMP2/p38 and EEF1E1/p18. Can interact simultaneously with MARS1 and EPRS1. Forms a linear complex that contains MARS1, EEF1E1, EPRS1 and AIMP2 that is at the core of the multisubunit complex. Interacts with ATM and ATR. The interaction with ATM, which takes place independently of TP53, is induced by DNA damage that may occur during genotoxic stress or cell growth. The interaction with ATR is enhanced by UV irradiation.</text>
</comment>
<comment type="subcellular location">
    <subcellularLocation>
        <location evidence="3">Cytoplasm</location>
    </subcellularLocation>
    <subcellularLocation>
        <location evidence="3">Nucleus</location>
    </subcellularLocation>
    <text evidence="3">Cytoplasmic under growth arrest conditions. Translocated into the nucleus when growth resumes at S phase and following DNA damage.</text>
</comment>
<gene>
    <name type="primary">EEF1E1</name>
</gene>
<sequence length="174" mass="19818">MAAAAELKLLEKSLGLRPGNKYSAQGERQIPVLQTNNGPSLTGLATIATHLVKQASKEHLLGSTAEEKALVQQWLEYRITQVDGHSSKEDTHTLLKDLNSYLEDKVYLAGYNITLADILLYYGLHRFIVDLTVQEKEKYLNVSRWFCHIQHYPDIRQHLSSVVFIKNRLYANSH</sequence>
<accession>P70102</accession>
<evidence type="ECO:0000250" key="1"/>
<evidence type="ECO:0000250" key="2">
    <source>
        <dbReference type="UniProtKB" id="O43324"/>
    </source>
</evidence>
<evidence type="ECO:0000250" key="3">
    <source>
        <dbReference type="UniProtKB" id="Q9D1M4"/>
    </source>
</evidence>
<feature type="initiator methionine" description="Removed" evidence="2">
    <location>
        <position position="1"/>
    </location>
</feature>
<feature type="chain" id="PRO_0000221131" description="Eukaryotic translation elongation factor 1 epsilon-1">
    <location>
        <begin position="2"/>
        <end position="174"/>
    </location>
</feature>
<feature type="domain" description="GST C-terminal">
    <location>
        <begin position="50"/>
        <end position="173"/>
    </location>
</feature>
<feature type="region of interest" description="N-terminal" evidence="1">
    <location>
        <begin position="2"/>
        <end position="56"/>
    </location>
</feature>
<feature type="region of interest" description="Linker" evidence="1">
    <location>
        <begin position="57"/>
        <end position="63"/>
    </location>
</feature>
<feature type="region of interest" description="C-terminal" evidence="1">
    <location>
        <begin position="64"/>
        <end position="152"/>
    </location>
</feature>
<feature type="coiled-coil region" evidence="1">
    <location>
        <begin position="153"/>
        <end position="169"/>
    </location>
</feature>
<feature type="modified residue" description="N-acetylalanine" evidence="2">
    <location>
        <position position="2"/>
    </location>
</feature>
<feature type="modified residue" description="N6-acetyllysine" evidence="2">
    <location>
        <position position="138"/>
    </location>
</feature>
<name>MCA3_CRIGR</name>
<protein>
    <recommendedName>
        <fullName>Eukaryotic translation elongation factor 1 epsilon-1</fullName>
    </recommendedName>
    <alternativeName>
        <fullName>Elongation factor p18</fullName>
    </alternativeName>
    <alternativeName>
        <fullName>Multisynthase complex auxiliary component p18</fullName>
    </alternativeName>
</protein>
<dbReference type="EMBL" id="U67146">
    <property type="protein sequence ID" value="AAB18625.1"/>
    <property type="molecule type" value="mRNA"/>
</dbReference>
<dbReference type="PIR" id="S74241">
    <property type="entry name" value="S74241"/>
</dbReference>
<dbReference type="RefSeq" id="NP_001233672.1">
    <property type="nucleotide sequence ID" value="NM_001246743.1"/>
</dbReference>
<dbReference type="SMR" id="P70102"/>
<dbReference type="PaxDb" id="10029-NP_001233672.1"/>
<dbReference type="Ensembl" id="ENSCGRT00001021048.1">
    <property type="protein sequence ID" value="ENSCGRP00001016804.1"/>
    <property type="gene ID" value="ENSCGRG00001017026.1"/>
</dbReference>
<dbReference type="GeneID" id="100689310"/>
<dbReference type="KEGG" id="cge:100689310"/>
<dbReference type="CTD" id="9521"/>
<dbReference type="eggNOG" id="KOG0867">
    <property type="taxonomic scope" value="Eukaryota"/>
</dbReference>
<dbReference type="GeneTree" id="ENSGT00390000016974"/>
<dbReference type="OMA" id="NWATGTH"/>
<dbReference type="OrthoDB" id="19141at2759"/>
<dbReference type="Proteomes" id="UP000694386">
    <property type="component" value="Unplaced"/>
</dbReference>
<dbReference type="Proteomes" id="UP001108280">
    <property type="component" value="Chromosome 3"/>
</dbReference>
<dbReference type="GO" id="GO:0017101">
    <property type="term" value="C:aminoacyl-tRNA synthetase multienzyme complex"/>
    <property type="evidence" value="ECO:0000250"/>
    <property type="project" value="UniProtKB"/>
</dbReference>
<dbReference type="GO" id="GO:0005737">
    <property type="term" value="C:cytoplasm"/>
    <property type="evidence" value="ECO:0000250"/>
    <property type="project" value="UniProtKB"/>
</dbReference>
<dbReference type="GO" id="GO:0005634">
    <property type="term" value="C:nucleus"/>
    <property type="evidence" value="ECO:0000250"/>
    <property type="project" value="UniProtKB"/>
</dbReference>
<dbReference type="GO" id="GO:0008285">
    <property type="term" value="P:negative regulation of cell population proliferation"/>
    <property type="evidence" value="ECO:0000250"/>
    <property type="project" value="UniProtKB"/>
</dbReference>
<dbReference type="GO" id="GO:0043065">
    <property type="term" value="P:positive regulation of apoptotic process"/>
    <property type="evidence" value="ECO:0000250"/>
    <property type="project" value="UniProtKB"/>
</dbReference>
<dbReference type="GO" id="GO:0043517">
    <property type="term" value="P:positive regulation of DNA damage response, signal transduction by p53 class mediator"/>
    <property type="evidence" value="ECO:0000250"/>
    <property type="project" value="UniProtKB"/>
</dbReference>
<dbReference type="GO" id="GO:0006412">
    <property type="term" value="P:translation"/>
    <property type="evidence" value="ECO:0007669"/>
    <property type="project" value="UniProtKB-KW"/>
</dbReference>
<dbReference type="CDD" id="cd10305">
    <property type="entry name" value="GST_C_AIMP3"/>
    <property type="match status" value="1"/>
</dbReference>
<dbReference type="FunFam" id="1.20.1050.10:FF:000032">
    <property type="entry name" value="Eukaryotic translation elongation factor 1 epsilon-1"/>
    <property type="match status" value="1"/>
</dbReference>
<dbReference type="FunFam" id="3.40.30.90:FF:000001">
    <property type="entry name" value="Eukaryotic translation elongation factor 1 epsilon-1"/>
    <property type="match status" value="1"/>
</dbReference>
<dbReference type="Gene3D" id="1.20.1050.10">
    <property type="match status" value="1"/>
</dbReference>
<dbReference type="Gene3D" id="3.40.30.90">
    <property type="match status" value="1"/>
</dbReference>
<dbReference type="InterPro" id="IPR053837">
    <property type="entry name" value="AIMP3/p18_C"/>
</dbReference>
<dbReference type="InterPro" id="IPR053836">
    <property type="entry name" value="Arc1-like_N"/>
</dbReference>
<dbReference type="InterPro" id="IPR042450">
    <property type="entry name" value="EEF1E1"/>
</dbReference>
<dbReference type="InterPro" id="IPR010987">
    <property type="entry name" value="Glutathione-S-Trfase_C-like"/>
</dbReference>
<dbReference type="InterPro" id="IPR036282">
    <property type="entry name" value="Glutathione-S-Trfase_C_sf"/>
</dbReference>
<dbReference type="PANTHER" id="PTHR44490">
    <property type="entry name" value="EUKARYOTIC TRANSLATION ELONGATION FACTOR 1 EPSILON-1"/>
    <property type="match status" value="1"/>
</dbReference>
<dbReference type="PANTHER" id="PTHR44490:SF1">
    <property type="entry name" value="EUKARYOTIC TRANSLATION ELONGATION FACTOR 1 EPSILON-1"/>
    <property type="match status" value="1"/>
</dbReference>
<dbReference type="Pfam" id="PF21972">
    <property type="entry name" value="Arc1p_N_like"/>
    <property type="match status" value="1"/>
</dbReference>
<dbReference type="SUPFAM" id="SSF47616">
    <property type="entry name" value="GST C-terminal domain-like"/>
    <property type="match status" value="1"/>
</dbReference>
<dbReference type="PROSITE" id="PS50405">
    <property type="entry name" value="GST_CTER"/>
    <property type="match status" value="1"/>
</dbReference>
<reference key="1">
    <citation type="journal article" date="1996" name="FEBS Lett.">
        <title>The p18 component of the multisynthetase complex shares a protein motif with the beta and gamma subunits of eukaryotic elongation factor 1.</title>
        <authorList>
            <person name="Quevillon S."/>
            <person name="Mirande M."/>
        </authorList>
    </citation>
    <scope>NUCLEOTIDE SEQUENCE [MRNA]</scope>
</reference>
<organism>
    <name type="scientific">Cricetulus griseus</name>
    <name type="common">Chinese hamster</name>
    <name type="synonym">Cricetulus barabensis griseus</name>
    <dbReference type="NCBI Taxonomy" id="10029"/>
    <lineage>
        <taxon>Eukaryota</taxon>
        <taxon>Metazoa</taxon>
        <taxon>Chordata</taxon>
        <taxon>Craniata</taxon>
        <taxon>Vertebrata</taxon>
        <taxon>Euteleostomi</taxon>
        <taxon>Mammalia</taxon>
        <taxon>Eutheria</taxon>
        <taxon>Euarchontoglires</taxon>
        <taxon>Glires</taxon>
        <taxon>Rodentia</taxon>
        <taxon>Myomorpha</taxon>
        <taxon>Muroidea</taxon>
        <taxon>Cricetidae</taxon>
        <taxon>Cricetinae</taxon>
        <taxon>Cricetulus</taxon>
    </lineage>
</organism>
<proteinExistence type="evidence at transcript level"/>